<sequence length="230" mass="25115">MVQKKPINRSLRGRFITFEGGEGAGKSTQIRLLAKRLEKARLRTLVTREPGGSPGAEAIRSALLAGIGKLIGGADAEALLFAAARDDHVRTLIEPALARGEWVLCDRFYDSTRAYQGKLGAVSLDLLNALQQVTIGDMKPDLTVILDIPVEIGLARAAVRRGSETPDRFESEAIDFHRGLREVFRQIAAQEPERCALIDANAEPEEVADRIWQAVRLRLLEPARAGAKSA</sequence>
<feature type="chain" id="PRO_1000097421" description="Thymidylate kinase">
    <location>
        <begin position="1"/>
        <end position="230"/>
    </location>
</feature>
<feature type="binding site" evidence="1">
    <location>
        <begin position="20"/>
        <end position="27"/>
    </location>
    <ligand>
        <name>ATP</name>
        <dbReference type="ChEBI" id="CHEBI:30616"/>
    </ligand>
</feature>
<keyword id="KW-0067">ATP-binding</keyword>
<keyword id="KW-0418">Kinase</keyword>
<keyword id="KW-0545">Nucleotide biosynthesis</keyword>
<keyword id="KW-0547">Nucleotide-binding</keyword>
<keyword id="KW-0808">Transferase</keyword>
<organism>
    <name type="scientific">Rhodopseudomonas palustris (strain TIE-1)</name>
    <dbReference type="NCBI Taxonomy" id="395960"/>
    <lineage>
        <taxon>Bacteria</taxon>
        <taxon>Pseudomonadati</taxon>
        <taxon>Pseudomonadota</taxon>
        <taxon>Alphaproteobacteria</taxon>
        <taxon>Hyphomicrobiales</taxon>
        <taxon>Nitrobacteraceae</taxon>
        <taxon>Rhodopseudomonas</taxon>
    </lineage>
</organism>
<accession>B3QKH1</accession>
<evidence type="ECO:0000255" key="1">
    <source>
        <dbReference type="HAMAP-Rule" id="MF_00165"/>
    </source>
</evidence>
<reference key="1">
    <citation type="submission" date="2008-05" db="EMBL/GenBank/DDBJ databases">
        <title>Complete sequence of Rhodopseudomonas palustris TIE-1.</title>
        <authorList>
            <consortium name="US DOE Joint Genome Institute"/>
            <person name="Lucas S."/>
            <person name="Copeland A."/>
            <person name="Lapidus A."/>
            <person name="Glavina del Rio T."/>
            <person name="Dalin E."/>
            <person name="Tice H."/>
            <person name="Pitluck S."/>
            <person name="Chain P."/>
            <person name="Malfatti S."/>
            <person name="Shin M."/>
            <person name="Vergez L."/>
            <person name="Lang D."/>
            <person name="Schmutz J."/>
            <person name="Larimer F."/>
            <person name="Land M."/>
            <person name="Hauser L."/>
            <person name="Kyrpides N."/>
            <person name="Mikhailova N."/>
            <person name="Emerson D."/>
            <person name="Newman D.K."/>
            <person name="Roden E."/>
            <person name="Richardson P."/>
        </authorList>
    </citation>
    <scope>NUCLEOTIDE SEQUENCE [LARGE SCALE GENOMIC DNA]</scope>
    <source>
        <strain>TIE-1</strain>
    </source>
</reference>
<protein>
    <recommendedName>
        <fullName evidence="1">Thymidylate kinase</fullName>
        <ecNumber evidence="1">2.7.4.9</ecNumber>
    </recommendedName>
    <alternativeName>
        <fullName evidence="1">dTMP kinase</fullName>
    </alternativeName>
</protein>
<name>KTHY_RHOPT</name>
<gene>
    <name evidence="1" type="primary">tmk</name>
    <name type="ordered locus">Rpal_3114</name>
</gene>
<comment type="function">
    <text evidence="1">Phosphorylation of dTMP to form dTDP in both de novo and salvage pathways of dTTP synthesis.</text>
</comment>
<comment type="catalytic activity">
    <reaction evidence="1">
        <text>dTMP + ATP = dTDP + ADP</text>
        <dbReference type="Rhea" id="RHEA:13517"/>
        <dbReference type="ChEBI" id="CHEBI:30616"/>
        <dbReference type="ChEBI" id="CHEBI:58369"/>
        <dbReference type="ChEBI" id="CHEBI:63528"/>
        <dbReference type="ChEBI" id="CHEBI:456216"/>
        <dbReference type="EC" id="2.7.4.9"/>
    </reaction>
</comment>
<comment type="similarity">
    <text evidence="1">Belongs to the thymidylate kinase family.</text>
</comment>
<proteinExistence type="inferred from homology"/>
<dbReference type="EC" id="2.7.4.9" evidence="1"/>
<dbReference type="EMBL" id="CP001096">
    <property type="protein sequence ID" value="ACF01620.1"/>
    <property type="molecule type" value="Genomic_DNA"/>
</dbReference>
<dbReference type="RefSeq" id="WP_012496241.1">
    <property type="nucleotide sequence ID" value="NC_011004.1"/>
</dbReference>
<dbReference type="SMR" id="B3QKH1"/>
<dbReference type="KEGG" id="rpt:Rpal_3114"/>
<dbReference type="HOGENOM" id="CLU_049131_0_0_5"/>
<dbReference type="OrthoDB" id="9774907at2"/>
<dbReference type="Proteomes" id="UP000001725">
    <property type="component" value="Chromosome"/>
</dbReference>
<dbReference type="GO" id="GO:0005829">
    <property type="term" value="C:cytosol"/>
    <property type="evidence" value="ECO:0007669"/>
    <property type="project" value="TreeGrafter"/>
</dbReference>
<dbReference type="GO" id="GO:0005524">
    <property type="term" value="F:ATP binding"/>
    <property type="evidence" value="ECO:0007669"/>
    <property type="project" value="UniProtKB-UniRule"/>
</dbReference>
<dbReference type="GO" id="GO:0004798">
    <property type="term" value="F:dTMP kinase activity"/>
    <property type="evidence" value="ECO:0007669"/>
    <property type="project" value="UniProtKB-UniRule"/>
</dbReference>
<dbReference type="GO" id="GO:0006233">
    <property type="term" value="P:dTDP biosynthetic process"/>
    <property type="evidence" value="ECO:0007669"/>
    <property type="project" value="InterPro"/>
</dbReference>
<dbReference type="GO" id="GO:0006235">
    <property type="term" value="P:dTTP biosynthetic process"/>
    <property type="evidence" value="ECO:0007669"/>
    <property type="project" value="UniProtKB-UniRule"/>
</dbReference>
<dbReference type="GO" id="GO:0006227">
    <property type="term" value="P:dUDP biosynthetic process"/>
    <property type="evidence" value="ECO:0007669"/>
    <property type="project" value="TreeGrafter"/>
</dbReference>
<dbReference type="CDD" id="cd01672">
    <property type="entry name" value="TMPK"/>
    <property type="match status" value="1"/>
</dbReference>
<dbReference type="FunFam" id="3.40.50.300:FF:000225">
    <property type="entry name" value="Thymidylate kinase"/>
    <property type="match status" value="1"/>
</dbReference>
<dbReference type="Gene3D" id="3.40.50.300">
    <property type="entry name" value="P-loop containing nucleotide triphosphate hydrolases"/>
    <property type="match status" value="1"/>
</dbReference>
<dbReference type="HAMAP" id="MF_00165">
    <property type="entry name" value="Thymidylate_kinase"/>
    <property type="match status" value="1"/>
</dbReference>
<dbReference type="InterPro" id="IPR027417">
    <property type="entry name" value="P-loop_NTPase"/>
</dbReference>
<dbReference type="InterPro" id="IPR039430">
    <property type="entry name" value="Thymidylate_kin-like_dom"/>
</dbReference>
<dbReference type="InterPro" id="IPR018095">
    <property type="entry name" value="Thymidylate_kin_CS"/>
</dbReference>
<dbReference type="InterPro" id="IPR018094">
    <property type="entry name" value="Thymidylate_kinase"/>
</dbReference>
<dbReference type="NCBIfam" id="TIGR00041">
    <property type="entry name" value="DTMP_kinase"/>
    <property type="match status" value="1"/>
</dbReference>
<dbReference type="PANTHER" id="PTHR10344">
    <property type="entry name" value="THYMIDYLATE KINASE"/>
    <property type="match status" value="1"/>
</dbReference>
<dbReference type="PANTHER" id="PTHR10344:SF4">
    <property type="entry name" value="UMP-CMP KINASE 2, MITOCHONDRIAL"/>
    <property type="match status" value="1"/>
</dbReference>
<dbReference type="Pfam" id="PF02223">
    <property type="entry name" value="Thymidylate_kin"/>
    <property type="match status" value="1"/>
</dbReference>
<dbReference type="SUPFAM" id="SSF52540">
    <property type="entry name" value="P-loop containing nucleoside triphosphate hydrolases"/>
    <property type="match status" value="1"/>
</dbReference>
<dbReference type="PROSITE" id="PS01331">
    <property type="entry name" value="THYMIDYLATE_KINASE"/>
    <property type="match status" value="1"/>
</dbReference>